<protein>
    <recommendedName>
        <fullName evidence="8">Zinc finger protein 366</fullName>
    </recommendedName>
    <alternativeName>
        <fullName evidence="5">Dendritic cell-specific transcript protein</fullName>
        <shortName evidence="5">DC-SCRIPT</shortName>
    </alternativeName>
</protein>
<sequence length="746" mass="84826">MQKAMKMVKDEDGPLNAAAKSIPSFPHCLQPEASRGKAPQRHPFPEALRGPFSQFRYEPSPGDLDGFPEVFEGGGSRKRKSMPTKVPYTHPAEEASIAQESKSLGPPNLTLLFPQPQRPKCDSQMIDLCNVGLQFYRTLEHLGGKPVKQEPVKPSAMWPQPTPPAFLPAPYPYYPKVHPGLMFPFFVPSSSPFPFSRHTFLPKQPPEPVLPRKVEPLESEETKQKVERVDVNVQIDDSYYVDVGGAQKRWQCPTCEKSYTSKYNLVTHILGHSGIKPHACSRCGKLFKQLSHLHTHMLTHQGTRPHKCQVCHKAFTQTSHLKRHMMQHSEVKPHNCRVCSRGFAYPSELKAHEAKHASGRENICVECGLDFPTLAQLKRHLTTHRGPIQYNCSECDKTFQYPSQLQNHMMKHKDIRPYICSECGMEFVQPHHLKQHSLTHKGVKEHKCGICGREFTLLANMKRHVLIHTNIRAYQCHLCYKSFVQKQTLKAHMIVHSDVKPFKCKLCGKEFNRMHNLMGHLHLHSDSKPFKCLYCPSKFTLKGNLTRHMKVKHGVMERGLHSQGLGRGRLVLVQSAGVLRNLEQEEPFDLSQKRSANGPMFQSDVDSTQDCLCQEEEEEAGEEDNCYEVEPYSPSLAPESQQLCAPEDLSTKQEQTLQDPGEGCRDQDAPEEQQEDRSEDHEGSDIDCEGKDIDCAIREERLSSRLLQSGGQGPSFSDYLYFKHRDEGLKELLERKMEKQAVLLGI</sequence>
<comment type="function">
    <text evidence="1">Has transcriptional repression activity. Acts as a corepressor of ESR1; the function seems to involve CTBP1 and histone deacetylases.</text>
</comment>
<comment type="subunit">
    <text evidence="1">Interacts with ESR1 and NRIP1. Interacts (via PXDLS motif) with CTBP1.</text>
</comment>
<comment type="subcellular location">
    <subcellularLocation>
        <location evidence="4">Nucleus</location>
    </subcellularLocation>
</comment>
<comment type="tissue specificity">
    <text evidence="4">Expressed in immature and mature dendritic cells (DCs).</text>
</comment>
<keyword id="KW-0238">DNA-binding</keyword>
<keyword id="KW-0479">Metal-binding</keyword>
<keyword id="KW-0539">Nucleus</keyword>
<keyword id="KW-1185">Reference proteome</keyword>
<keyword id="KW-0677">Repeat</keyword>
<keyword id="KW-0678">Repressor</keyword>
<keyword id="KW-0804">Transcription</keyword>
<keyword id="KW-0805">Transcription regulation</keyword>
<keyword id="KW-0862">Zinc</keyword>
<keyword id="KW-0863">Zinc-finger</keyword>
<gene>
    <name evidence="1" type="primary">Znf366</name>
    <name evidence="8" type="synonym">Zfp366</name>
</gene>
<dbReference type="EMBL" id="AC128670">
    <property type="status" value="NOT_ANNOTATED_CDS"/>
    <property type="molecule type" value="Genomic_DNA"/>
</dbReference>
<dbReference type="EMBL" id="BC070399">
    <property type="protein sequence ID" value="AAH70399.1"/>
    <property type="molecule type" value="mRNA"/>
</dbReference>
<dbReference type="CCDS" id="CCDS26720.1"/>
<dbReference type="RefSeq" id="NP_001004149.1">
    <property type="nucleotide sequence ID" value="NM_001004149.1"/>
</dbReference>
<dbReference type="SMR" id="Q6NS86"/>
<dbReference type="FunCoup" id="Q6NS86">
    <property type="interactions" value="862"/>
</dbReference>
<dbReference type="STRING" id="10090.ENSMUSP00000060040"/>
<dbReference type="GlyGen" id="Q6NS86">
    <property type="glycosylation" value="1 site"/>
</dbReference>
<dbReference type="PhosphoSitePlus" id="Q6NS86"/>
<dbReference type="PaxDb" id="10090-ENSMUSP00000060040"/>
<dbReference type="PeptideAtlas" id="Q6NS86"/>
<dbReference type="ProteomicsDB" id="275009"/>
<dbReference type="Antibodypedia" id="12194">
    <property type="antibodies" value="136 antibodies from 27 providers"/>
</dbReference>
<dbReference type="DNASU" id="238803"/>
<dbReference type="Ensembl" id="ENSMUST00000056558.11">
    <property type="protein sequence ID" value="ENSMUSP00000060040.9"/>
    <property type="gene ID" value="ENSMUSG00000050919.11"/>
</dbReference>
<dbReference type="GeneID" id="238803"/>
<dbReference type="KEGG" id="mmu:238803"/>
<dbReference type="UCSC" id="uc007rpl.1">
    <property type="organism name" value="mouse"/>
</dbReference>
<dbReference type="AGR" id="MGI:2178429"/>
<dbReference type="CTD" id="238803"/>
<dbReference type="MGI" id="MGI:2178429">
    <property type="gene designation" value="Zfp366"/>
</dbReference>
<dbReference type="VEuPathDB" id="HostDB:ENSMUSG00000050919"/>
<dbReference type="eggNOG" id="KOG1721">
    <property type="taxonomic scope" value="Eukaryota"/>
</dbReference>
<dbReference type="GeneTree" id="ENSGT00940000155498"/>
<dbReference type="HOGENOM" id="CLU_019459_2_1_1"/>
<dbReference type="InParanoid" id="Q6NS86"/>
<dbReference type="OMA" id="FKHRNKS"/>
<dbReference type="OrthoDB" id="7295497at2759"/>
<dbReference type="PhylomeDB" id="Q6NS86"/>
<dbReference type="TreeFam" id="TF331510"/>
<dbReference type="BioGRID-ORCS" id="238803">
    <property type="hits" value="5 hits in 75 CRISPR screens"/>
</dbReference>
<dbReference type="ChiTaRS" id="Zfp366">
    <property type="organism name" value="mouse"/>
</dbReference>
<dbReference type="PRO" id="PR:Q6NS86"/>
<dbReference type="Proteomes" id="UP000000589">
    <property type="component" value="Chromosome 13"/>
</dbReference>
<dbReference type="RNAct" id="Q6NS86">
    <property type="molecule type" value="protein"/>
</dbReference>
<dbReference type="Bgee" id="ENSMUSG00000050919">
    <property type="expression patterns" value="Expressed in lung and 50 other cell types or tissues"/>
</dbReference>
<dbReference type="GO" id="GO:0005654">
    <property type="term" value="C:nucleoplasm"/>
    <property type="evidence" value="ECO:0007669"/>
    <property type="project" value="Ensembl"/>
</dbReference>
<dbReference type="GO" id="GO:0005634">
    <property type="term" value="C:nucleus"/>
    <property type="evidence" value="ECO:0000314"/>
    <property type="project" value="MGI"/>
</dbReference>
<dbReference type="GO" id="GO:0003677">
    <property type="term" value="F:DNA binding"/>
    <property type="evidence" value="ECO:0007669"/>
    <property type="project" value="UniProtKB-KW"/>
</dbReference>
<dbReference type="GO" id="GO:0030331">
    <property type="term" value="F:nuclear estrogen receptor binding"/>
    <property type="evidence" value="ECO:0007669"/>
    <property type="project" value="Ensembl"/>
</dbReference>
<dbReference type="GO" id="GO:0003714">
    <property type="term" value="F:transcription corepressor activity"/>
    <property type="evidence" value="ECO:0007669"/>
    <property type="project" value="Ensembl"/>
</dbReference>
<dbReference type="GO" id="GO:0008270">
    <property type="term" value="F:zinc ion binding"/>
    <property type="evidence" value="ECO:0007669"/>
    <property type="project" value="UniProtKB-KW"/>
</dbReference>
<dbReference type="GO" id="GO:0033147">
    <property type="term" value="P:negative regulation of intracellular estrogen receptor signaling pathway"/>
    <property type="evidence" value="ECO:0007669"/>
    <property type="project" value="Ensembl"/>
</dbReference>
<dbReference type="GO" id="GO:0000122">
    <property type="term" value="P:negative regulation of transcription by RNA polymerase II"/>
    <property type="evidence" value="ECO:0007669"/>
    <property type="project" value="Ensembl"/>
</dbReference>
<dbReference type="GO" id="GO:0043627">
    <property type="term" value="P:response to estrogen"/>
    <property type="evidence" value="ECO:0007669"/>
    <property type="project" value="Ensembl"/>
</dbReference>
<dbReference type="FunFam" id="3.30.160.60:FF:000161">
    <property type="entry name" value="Zinc finger protein 366"/>
    <property type="match status" value="1"/>
</dbReference>
<dbReference type="FunFam" id="3.30.160.60:FF:000186">
    <property type="entry name" value="Zinc finger protein 366"/>
    <property type="match status" value="1"/>
</dbReference>
<dbReference type="FunFam" id="3.30.160.60:FF:000203">
    <property type="entry name" value="Zinc finger protein 366"/>
    <property type="match status" value="1"/>
</dbReference>
<dbReference type="FunFam" id="3.30.160.60:FF:001180">
    <property type="entry name" value="Zinc finger protein 366"/>
    <property type="match status" value="1"/>
</dbReference>
<dbReference type="FunFam" id="3.30.160.60:FF:001304">
    <property type="entry name" value="Zinc finger protein 366"/>
    <property type="match status" value="1"/>
</dbReference>
<dbReference type="FunFam" id="3.30.160.60:FF:001574">
    <property type="entry name" value="Zinc finger protein 366"/>
    <property type="match status" value="1"/>
</dbReference>
<dbReference type="FunFam" id="3.30.160.60:FF:001721">
    <property type="entry name" value="Zinc finger protein 366"/>
    <property type="match status" value="1"/>
</dbReference>
<dbReference type="FunFam" id="3.30.160.60:FF:000182">
    <property type="entry name" value="zinc finger protein 366"/>
    <property type="match status" value="1"/>
</dbReference>
<dbReference type="FunFam" id="3.30.160.60:FF:000191">
    <property type="entry name" value="zinc finger protein 366"/>
    <property type="match status" value="1"/>
</dbReference>
<dbReference type="FunFam" id="3.30.160.60:FF:000502">
    <property type="entry name" value="Zinc finger protein 710"/>
    <property type="match status" value="1"/>
</dbReference>
<dbReference type="Gene3D" id="3.30.160.60">
    <property type="entry name" value="Classic Zinc Finger"/>
    <property type="match status" value="10"/>
</dbReference>
<dbReference type="InterPro" id="IPR050589">
    <property type="entry name" value="Ikaros_C2H2-ZF"/>
</dbReference>
<dbReference type="InterPro" id="IPR036236">
    <property type="entry name" value="Znf_C2H2_sf"/>
</dbReference>
<dbReference type="InterPro" id="IPR013087">
    <property type="entry name" value="Znf_C2H2_type"/>
</dbReference>
<dbReference type="PANTHER" id="PTHR24404:SF114">
    <property type="entry name" value="KLUMPFUSS, ISOFORM B-RELATED"/>
    <property type="match status" value="1"/>
</dbReference>
<dbReference type="PANTHER" id="PTHR24404">
    <property type="entry name" value="ZINC FINGER PROTEIN"/>
    <property type="match status" value="1"/>
</dbReference>
<dbReference type="Pfam" id="PF00096">
    <property type="entry name" value="zf-C2H2"/>
    <property type="match status" value="9"/>
</dbReference>
<dbReference type="Pfam" id="PF13912">
    <property type="entry name" value="zf-C2H2_6"/>
    <property type="match status" value="1"/>
</dbReference>
<dbReference type="SMART" id="SM00355">
    <property type="entry name" value="ZnF_C2H2"/>
    <property type="match status" value="11"/>
</dbReference>
<dbReference type="SUPFAM" id="SSF57667">
    <property type="entry name" value="beta-beta-alpha zinc fingers"/>
    <property type="match status" value="6"/>
</dbReference>
<dbReference type="PROSITE" id="PS00028">
    <property type="entry name" value="ZINC_FINGER_C2H2_1"/>
    <property type="match status" value="11"/>
</dbReference>
<dbReference type="PROSITE" id="PS50157">
    <property type="entry name" value="ZINC_FINGER_C2H2_2"/>
    <property type="match status" value="11"/>
</dbReference>
<evidence type="ECO:0000250" key="1">
    <source>
        <dbReference type="UniProtKB" id="Q8N895"/>
    </source>
</evidence>
<evidence type="ECO:0000255" key="2">
    <source>
        <dbReference type="PROSITE-ProRule" id="PRU00042"/>
    </source>
</evidence>
<evidence type="ECO:0000256" key="3">
    <source>
        <dbReference type="SAM" id="MobiDB-lite"/>
    </source>
</evidence>
<evidence type="ECO:0000269" key="4">
    <source>
    </source>
</evidence>
<evidence type="ECO:0000303" key="5">
    <source>
    </source>
</evidence>
<evidence type="ECO:0000305" key="6"/>
<evidence type="ECO:0000312" key="7">
    <source>
        <dbReference type="EMBL" id="AAH70399.1"/>
    </source>
</evidence>
<evidence type="ECO:0000312" key="8">
    <source>
        <dbReference type="MGI" id="MGI:2178429"/>
    </source>
</evidence>
<evidence type="ECO:0000312" key="9">
    <source>
        <dbReference type="Proteomes" id="UP000000589"/>
    </source>
</evidence>
<reference evidence="9" key="1">
    <citation type="journal article" date="2009" name="PLoS Biol.">
        <title>Lineage-specific biology revealed by a finished genome assembly of the mouse.</title>
        <authorList>
            <person name="Church D.M."/>
            <person name="Goodstadt L."/>
            <person name="Hillier L.W."/>
            <person name="Zody M.C."/>
            <person name="Goldstein S."/>
            <person name="She X."/>
            <person name="Bult C.J."/>
            <person name="Agarwala R."/>
            <person name="Cherry J.L."/>
            <person name="DiCuccio M."/>
            <person name="Hlavina W."/>
            <person name="Kapustin Y."/>
            <person name="Meric P."/>
            <person name="Maglott D."/>
            <person name="Birtle Z."/>
            <person name="Marques A.C."/>
            <person name="Graves T."/>
            <person name="Zhou S."/>
            <person name="Teague B."/>
            <person name="Potamousis K."/>
            <person name="Churas C."/>
            <person name="Place M."/>
            <person name="Herschleb J."/>
            <person name="Runnheim R."/>
            <person name="Forrest D."/>
            <person name="Amos-Landgraf J."/>
            <person name="Schwartz D.C."/>
            <person name="Cheng Z."/>
            <person name="Lindblad-Toh K."/>
            <person name="Eichler E.E."/>
            <person name="Ponting C.P."/>
        </authorList>
    </citation>
    <scope>NUCLEOTIDE SEQUENCE [LARGE SCALE GENOMIC DNA]</scope>
    <source>
        <strain evidence="9">C57BL/6J</strain>
    </source>
</reference>
<reference evidence="7" key="2">
    <citation type="journal article" date="2004" name="Genome Res.">
        <title>The status, quality, and expansion of the NIH full-length cDNA project: the Mammalian Gene Collection (MGC).</title>
        <authorList>
            <consortium name="The MGC Project Team"/>
        </authorList>
    </citation>
    <scope>NUCLEOTIDE SEQUENCE [LARGE SCALE MRNA]</scope>
    <source>
        <strain evidence="7">C57BL/6J</strain>
        <tissue evidence="7">Brain</tissue>
    </source>
</reference>
<reference evidence="6" key="3">
    <citation type="journal article" date="2006" name="J. Leukoc. Biol.">
        <title>Molecular characterization of the murine homologue of the DC-derived protein DC-SCRIPT.</title>
        <authorList>
            <person name="Triantis V."/>
            <person name="Moulin V."/>
            <person name="Looman M.W."/>
            <person name="Hartgers F.C."/>
            <person name="Janssen R.A."/>
            <person name="Adema G.J."/>
        </authorList>
    </citation>
    <scope>SUBCELLULAR LOCATION</scope>
    <scope>TISSUE SPECIFICITY</scope>
</reference>
<proteinExistence type="evidence at transcript level"/>
<accession>Q6NS86</accession>
<name>ZN366_MOUSE</name>
<feature type="chain" id="PRO_0000439856" description="Zinc finger protein 366">
    <location>
        <begin position="1"/>
        <end position="746"/>
    </location>
</feature>
<feature type="zinc finger region" description="C2H2-type 1" evidence="2">
    <location>
        <begin position="250"/>
        <end position="272"/>
    </location>
</feature>
<feature type="zinc finger region" description="C2H2-type 2" evidence="2">
    <location>
        <begin position="278"/>
        <end position="300"/>
    </location>
</feature>
<feature type="zinc finger region" description="C2H2-type 3" evidence="2">
    <location>
        <begin position="306"/>
        <end position="328"/>
    </location>
</feature>
<feature type="zinc finger region" description="C2H2-type 4" evidence="2">
    <location>
        <begin position="334"/>
        <end position="356"/>
    </location>
</feature>
<feature type="zinc finger region" description="C2H2-type 5" evidence="2">
    <location>
        <begin position="362"/>
        <end position="384"/>
    </location>
</feature>
<feature type="zinc finger region" description="C2H2-type 6" evidence="2">
    <location>
        <begin position="390"/>
        <end position="412"/>
    </location>
</feature>
<feature type="zinc finger region" description="C2H2-type 7" evidence="2">
    <location>
        <begin position="418"/>
        <end position="440"/>
    </location>
</feature>
<feature type="zinc finger region" description="C2H2-type 8" evidence="2">
    <location>
        <begin position="446"/>
        <end position="468"/>
    </location>
</feature>
<feature type="zinc finger region" description="C2H2-type 9" evidence="2">
    <location>
        <begin position="474"/>
        <end position="496"/>
    </location>
</feature>
<feature type="zinc finger region" description="C2H2-type 10" evidence="2">
    <location>
        <begin position="502"/>
        <end position="524"/>
    </location>
</feature>
<feature type="zinc finger region" description="C2H2-type 11" evidence="2">
    <location>
        <begin position="530"/>
        <end position="553"/>
    </location>
</feature>
<feature type="region of interest" description="Disordered" evidence="3">
    <location>
        <begin position="1"/>
        <end position="64"/>
    </location>
</feature>
<feature type="region of interest" description="Interaction with NRIP1" evidence="1">
    <location>
        <begin position="452"/>
        <end position="746"/>
    </location>
</feature>
<feature type="region of interest" description="Disordered" evidence="3">
    <location>
        <begin position="587"/>
        <end position="689"/>
    </location>
</feature>
<feature type="short sequence motif" description="PXDLS" evidence="1">
    <location>
        <begin position="587"/>
        <end position="591"/>
    </location>
</feature>
<feature type="compositionally biased region" description="Acidic residues" evidence="3">
    <location>
        <begin position="613"/>
        <end position="627"/>
    </location>
</feature>
<feature type="compositionally biased region" description="Basic and acidic residues" evidence="3">
    <location>
        <begin position="675"/>
        <end position="689"/>
    </location>
</feature>
<organism evidence="9">
    <name type="scientific">Mus musculus</name>
    <name type="common">Mouse</name>
    <dbReference type="NCBI Taxonomy" id="10090"/>
    <lineage>
        <taxon>Eukaryota</taxon>
        <taxon>Metazoa</taxon>
        <taxon>Chordata</taxon>
        <taxon>Craniata</taxon>
        <taxon>Vertebrata</taxon>
        <taxon>Euteleostomi</taxon>
        <taxon>Mammalia</taxon>
        <taxon>Eutheria</taxon>
        <taxon>Euarchontoglires</taxon>
        <taxon>Glires</taxon>
        <taxon>Rodentia</taxon>
        <taxon>Myomorpha</taxon>
        <taxon>Muroidea</taxon>
        <taxon>Muridae</taxon>
        <taxon>Murinae</taxon>
        <taxon>Mus</taxon>
        <taxon>Mus</taxon>
    </lineage>
</organism>